<organism>
    <name type="scientific">Monodelphis domestica</name>
    <name type="common">Gray short-tailed opossum</name>
    <dbReference type="NCBI Taxonomy" id="13616"/>
    <lineage>
        <taxon>Eukaryota</taxon>
        <taxon>Metazoa</taxon>
        <taxon>Chordata</taxon>
        <taxon>Craniata</taxon>
        <taxon>Vertebrata</taxon>
        <taxon>Euteleostomi</taxon>
        <taxon>Mammalia</taxon>
        <taxon>Metatheria</taxon>
        <taxon>Didelphimorphia</taxon>
        <taxon>Didelphidae</taxon>
        <taxon>Monodelphis</taxon>
    </lineage>
</organism>
<accession>Q8HY33</accession>
<gene>
    <name type="primary">CA1</name>
</gene>
<dbReference type="EC" id="4.2.1.1" evidence="3"/>
<dbReference type="EC" id="4.2.1.69" evidence="3"/>
<dbReference type="EMBL" id="AJ417908">
    <property type="protein sequence ID" value="CAD10681.1"/>
    <property type="molecule type" value="mRNA"/>
</dbReference>
<dbReference type="RefSeq" id="NP_001028142.1">
    <property type="nucleotide sequence ID" value="NM_001032970.1"/>
</dbReference>
<dbReference type="SMR" id="Q8HY33"/>
<dbReference type="FunCoup" id="Q8HY33">
    <property type="interactions" value="122"/>
</dbReference>
<dbReference type="STRING" id="13616.ENSMODP00000007216"/>
<dbReference type="Ensembl" id="ENSMODT00000007364.3">
    <property type="protein sequence ID" value="ENSMODP00000007216.1"/>
    <property type="gene ID" value="ENSMODG00000005833.3"/>
</dbReference>
<dbReference type="GeneID" id="497246"/>
<dbReference type="KEGG" id="mdo:497246"/>
<dbReference type="CTD" id="759"/>
<dbReference type="eggNOG" id="KOG0382">
    <property type="taxonomic scope" value="Eukaryota"/>
</dbReference>
<dbReference type="GeneTree" id="ENSGT00940000161270"/>
<dbReference type="HOGENOM" id="CLU_039326_2_1_1"/>
<dbReference type="InParanoid" id="Q8HY33"/>
<dbReference type="OMA" id="FHVNYED"/>
<dbReference type="OrthoDB" id="429145at2759"/>
<dbReference type="TreeFam" id="TF316425"/>
<dbReference type="Proteomes" id="UP000002280">
    <property type="component" value="Chromosome 3"/>
</dbReference>
<dbReference type="Bgee" id="ENSMODG00000005833">
    <property type="expression patterns" value="Expressed in blood and 16 other cell types or tissues"/>
</dbReference>
<dbReference type="GO" id="GO:0005737">
    <property type="term" value="C:cytoplasm"/>
    <property type="evidence" value="ECO:0000318"/>
    <property type="project" value="GO_Central"/>
</dbReference>
<dbReference type="GO" id="GO:0004064">
    <property type="term" value="F:arylesterase activity"/>
    <property type="evidence" value="ECO:0007669"/>
    <property type="project" value="Ensembl"/>
</dbReference>
<dbReference type="GO" id="GO:0004089">
    <property type="term" value="F:carbonate dehydratase activity"/>
    <property type="evidence" value="ECO:0000250"/>
    <property type="project" value="UniProtKB"/>
</dbReference>
<dbReference type="GO" id="GO:0018820">
    <property type="term" value="F:cyanamide hydratase activity"/>
    <property type="evidence" value="ECO:0000250"/>
    <property type="project" value="UniProtKB"/>
</dbReference>
<dbReference type="GO" id="GO:0008270">
    <property type="term" value="F:zinc ion binding"/>
    <property type="evidence" value="ECO:0007669"/>
    <property type="project" value="InterPro"/>
</dbReference>
<dbReference type="FunFam" id="3.10.200.10:FF:000001">
    <property type="entry name" value="Carbonic anhydrase 2"/>
    <property type="match status" value="1"/>
</dbReference>
<dbReference type="Gene3D" id="3.10.200.10">
    <property type="entry name" value="Alpha carbonic anhydrase"/>
    <property type="match status" value="1"/>
</dbReference>
<dbReference type="InterPro" id="IPR001148">
    <property type="entry name" value="CA_dom"/>
</dbReference>
<dbReference type="InterPro" id="IPR036398">
    <property type="entry name" value="CA_dom_sf"/>
</dbReference>
<dbReference type="InterPro" id="IPR023561">
    <property type="entry name" value="Carbonic_anhydrase_a-class"/>
</dbReference>
<dbReference type="InterPro" id="IPR018338">
    <property type="entry name" value="Carbonic_anhydrase_a-class_CS"/>
</dbReference>
<dbReference type="PANTHER" id="PTHR18952">
    <property type="entry name" value="CARBONIC ANHYDRASE"/>
    <property type="match status" value="1"/>
</dbReference>
<dbReference type="PANTHER" id="PTHR18952:SF282">
    <property type="entry name" value="CARBONIC ANHYDRASE 1"/>
    <property type="match status" value="1"/>
</dbReference>
<dbReference type="Pfam" id="PF00194">
    <property type="entry name" value="Carb_anhydrase"/>
    <property type="match status" value="1"/>
</dbReference>
<dbReference type="SMART" id="SM01057">
    <property type="entry name" value="Carb_anhydrase"/>
    <property type="match status" value="1"/>
</dbReference>
<dbReference type="SUPFAM" id="SSF51069">
    <property type="entry name" value="Carbonic anhydrase"/>
    <property type="match status" value="1"/>
</dbReference>
<dbReference type="PROSITE" id="PS00162">
    <property type="entry name" value="ALPHA_CA_1"/>
    <property type="match status" value="1"/>
</dbReference>
<dbReference type="PROSITE" id="PS51144">
    <property type="entry name" value="ALPHA_CA_2"/>
    <property type="match status" value="1"/>
</dbReference>
<keyword id="KW-0007">Acetylation</keyword>
<keyword id="KW-0963">Cytoplasm</keyword>
<keyword id="KW-0456">Lyase</keyword>
<keyword id="KW-0479">Metal-binding</keyword>
<keyword id="KW-1185">Reference proteome</keyword>
<keyword id="KW-0862">Zinc</keyword>
<sequence length="262" mass="29175">MANLNWSYEGENGPEHWSKLYPIANGDNQSPIDIKTKEVKHDASLKPISVSYNPATAKEIVNVSHNFQVNFEDKDNQSVLKGGPFTGSFRLRQFHFHWGTADDHGSEHTVDGVKYSSELHIVHWNSEKYSSFSEAAEKPDGLAIIAVFIKAGQANPGLQKVIDALSSIKTKGKKAPFANFDPSLLIPQSSDYWSYHGSLTHPPLHESVTWIIYREPISASSEQLAKFRSLLSTAEGEKASSILHNHRLPQPLKGRQVKASFK</sequence>
<proteinExistence type="evidence at transcript level"/>
<reference key="1">
    <citation type="submission" date="2001-10" db="EMBL/GenBank/DDBJ databases">
        <title>Characterisation of opossum (Monodelphis domestica) carbonic anhydrase I and alpha globin coding sequences.</title>
        <authorList>
            <person name="Barome P.O."/>
        </authorList>
    </citation>
    <scope>NUCLEOTIDE SEQUENCE [MRNA]</scope>
</reference>
<comment type="function">
    <text evidence="3">Catalyzes the reversible hydration of carbon dioxide. Can hydrate cyanamide to urea.</text>
</comment>
<comment type="catalytic activity">
    <reaction evidence="3">
        <text>hydrogencarbonate + H(+) = CO2 + H2O</text>
        <dbReference type="Rhea" id="RHEA:10748"/>
        <dbReference type="ChEBI" id="CHEBI:15377"/>
        <dbReference type="ChEBI" id="CHEBI:15378"/>
        <dbReference type="ChEBI" id="CHEBI:16526"/>
        <dbReference type="ChEBI" id="CHEBI:17544"/>
        <dbReference type="EC" id="4.2.1.1"/>
    </reaction>
</comment>
<comment type="catalytic activity">
    <reaction evidence="3">
        <text>urea = cyanamide + H2O</text>
        <dbReference type="Rhea" id="RHEA:23056"/>
        <dbReference type="ChEBI" id="CHEBI:15377"/>
        <dbReference type="ChEBI" id="CHEBI:16199"/>
        <dbReference type="ChEBI" id="CHEBI:16698"/>
        <dbReference type="EC" id="4.2.1.69"/>
    </reaction>
</comment>
<comment type="cofactor">
    <cofactor evidence="3">
        <name>Zn(2+)</name>
        <dbReference type="ChEBI" id="CHEBI:29105"/>
    </cofactor>
</comment>
<comment type="activity regulation">
    <text evidence="1">Inhibited by acetazolamide.</text>
</comment>
<comment type="subcellular location">
    <subcellularLocation>
        <location evidence="2">Cytoplasm</location>
    </subcellularLocation>
</comment>
<comment type="similarity">
    <text evidence="6">Belongs to the alpha-carbonic anhydrase family.</text>
</comment>
<feature type="initiator methionine" description="Removed" evidence="3">
    <location>
        <position position="1"/>
    </location>
</feature>
<feature type="chain" id="PRO_0000077412" description="Carbonic anhydrase 1">
    <location>
        <begin position="2"/>
        <end position="262"/>
    </location>
</feature>
<feature type="domain" description="Alpha-carbonic anhydrase" evidence="5">
    <location>
        <begin position="4"/>
        <end position="261"/>
    </location>
</feature>
<feature type="active site" description="Proton donor/acceptor" evidence="4">
    <location>
        <position position="65"/>
    </location>
</feature>
<feature type="binding site" evidence="3">
    <location>
        <position position="95"/>
    </location>
    <ligand>
        <name>Zn(2+)</name>
        <dbReference type="ChEBI" id="CHEBI:29105"/>
        <note>catalytic</note>
    </ligand>
</feature>
<feature type="binding site" evidence="3">
    <location>
        <position position="97"/>
    </location>
    <ligand>
        <name>Zn(2+)</name>
        <dbReference type="ChEBI" id="CHEBI:29105"/>
        <note>catalytic</note>
    </ligand>
</feature>
<feature type="binding site" evidence="3">
    <location>
        <position position="120"/>
    </location>
    <ligand>
        <name>Zn(2+)</name>
        <dbReference type="ChEBI" id="CHEBI:29105"/>
        <note>catalytic</note>
    </ligand>
</feature>
<feature type="binding site" evidence="4">
    <location>
        <begin position="200"/>
        <end position="201"/>
    </location>
    <ligand>
        <name>substrate</name>
    </ligand>
</feature>
<feature type="binding site" evidence="3">
    <location>
        <position position="200"/>
    </location>
    <ligand>
        <name>substrate</name>
    </ligand>
</feature>
<feature type="modified residue" description="N-acetylalanine" evidence="3">
    <location>
        <position position="2"/>
    </location>
</feature>
<evidence type="ECO:0000250" key="1"/>
<evidence type="ECO:0000250" key="2">
    <source>
        <dbReference type="UniProtKB" id="B0BNN3"/>
    </source>
</evidence>
<evidence type="ECO:0000250" key="3">
    <source>
        <dbReference type="UniProtKB" id="P00915"/>
    </source>
</evidence>
<evidence type="ECO:0000250" key="4">
    <source>
        <dbReference type="UniProtKB" id="P00918"/>
    </source>
</evidence>
<evidence type="ECO:0000255" key="5">
    <source>
        <dbReference type="PROSITE-ProRule" id="PRU01134"/>
    </source>
</evidence>
<evidence type="ECO:0000305" key="6"/>
<name>CAH1_MONDO</name>
<protein>
    <recommendedName>
        <fullName>Carbonic anhydrase 1</fullName>
        <ecNumber evidence="3">4.2.1.1</ecNumber>
    </recommendedName>
    <alternativeName>
        <fullName>Carbonate dehydratase I</fullName>
    </alternativeName>
    <alternativeName>
        <fullName>Carbonic anhydrase I</fullName>
        <shortName>CA-I</shortName>
    </alternativeName>
    <alternativeName>
        <fullName>Cyanamide hydratase CA1</fullName>
        <ecNumber evidence="3">4.2.1.69</ecNumber>
    </alternativeName>
</protein>